<organism>
    <name type="scientific">Drosophila mojavensis</name>
    <name type="common">Fruit fly</name>
    <dbReference type="NCBI Taxonomy" id="7230"/>
    <lineage>
        <taxon>Eukaryota</taxon>
        <taxon>Metazoa</taxon>
        <taxon>Ecdysozoa</taxon>
        <taxon>Arthropoda</taxon>
        <taxon>Hexapoda</taxon>
        <taxon>Insecta</taxon>
        <taxon>Pterygota</taxon>
        <taxon>Neoptera</taxon>
        <taxon>Endopterygota</taxon>
        <taxon>Diptera</taxon>
        <taxon>Brachycera</taxon>
        <taxon>Muscomorpha</taxon>
        <taxon>Ephydroidea</taxon>
        <taxon>Drosophilidae</taxon>
        <taxon>Drosophila</taxon>
    </lineage>
</organism>
<keyword id="KW-0175">Coiled coil</keyword>
<keyword id="KW-0217">Developmental protein</keyword>
<keyword id="KW-0256">Endoplasmic reticulum</keyword>
<keyword id="KW-0472">Membrane</keyword>
<keyword id="KW-1185">Reference proteome</keyword>
<keyword id="KW-0732">Signal</keyword>
<keyword id="KW-0812">Transmembrane</keyword>
<keyword id="KW-1133">Transmembrane helix</keyword>
<reference evidence="4" key="1">
    <citation type="journal article" date="2007" name="Nature">
        <title>Evolution of genes and genomes on the Drosophila phylogeny.</title>
        <authorList>
            <consortium name="Drosophila 12 genomes consortium"/>
        </authorList>
    </citation>
    <scope>NUCLEOTIDE SEQUENCE [LARGE SCALE GENOMIC DNA]</scope>
    <source>
        <strain evidence="4">Tucson 15081-1352.22</strain>
    </source>
</reference>
<feature type="signal peptide" evidence="2">
    <location>
        <begin position="1"/>
        <end position="20"/>
    </location>
</feature>
<feature type="chain" id="PRO_0000393928" description="Transmembrane emp24 domain-containing protein eca" evidence="2">
    <location>
        <begin position="21"/>
        <end position="216"/>
    </location>
</feature>
<feature type="topological domain" description="Lumenal" evidence="2">
    <location>
        <begin position="21"/>
        <end position="183"/>
    </location>
</feature>
<feature type="transmembrane region" description="Helical" evidence="2">
    <location>
        <begin position="184"/>
        <end position="203"/>
    </location>
</feature>
<feature type="topological domain" description="Cytoplasmic" evidence="2">
    <location>
        <begin position="204"/>
        <end position="216"/>
    </location>
</feature>
<feature type="domain" description="GOLD" evidence="3">
    <location>
        <begin position="30"/>
        <end position="126"/>
    </location>
</feature>
<feature type="coiled-coil region" evidence="2">
    <location>
        <begin position="134"/>
        <end position="164"/>
    </location>
</feature>
<feature type="short sequence motif" description="Prevents secretion from ER" evidence="2">
    <location>
        <begin position="213"/>
        <end position="216"/>
    </location>
</feature>
<protein>
    <recommendedName>
        <fullName evidence="1">Transmembrane emp24 domain-containing protein eca</fullName>
    </recommendedName>
</protein>
<name>TMEDE_DROMO</name>
<proteinExistence type="inferred from homology"/>
<gene>
    <name evidence="1" type="primary">eca</name>
    <name type="ORF">GI10144</name>
</gene>
<accession>B4KB41</accession>
<sequence>MRDQWICLALVLCALHSACGLYFHISETERKCFIEEVPDETTVIVNYKVELYDPRSNGFMPSSPGIGMHVEVRDSDDKVILSRVYSSQGRMSFTSHTPGEHVICMYSNSTAWFNGAQLRVHLDIQVGEHAIDYANVAQKEKLTELQLRIRQLLDQVEQITKEQNYQRYREERFRHTSESTNSRVLWWSLAQTVVLVCMGFWQMRHLKSFFEAKKLV</sequence>
<dbReference type="EMBL" id="CH933806">
    <property type="protein sequence ID" value="EDW15745.1"/>
    <property type="molecule type" value="Genomic_DNA"/>
</dbReference>
<dbReference type="SMR" id="B4KB41"/>
<dbReference type="FunCoup" id="B4KB41">
    <property type="interactions" value="1125"/>
</dbReference>
<dbReference type="EnsemblMetazoa" id="FBtr0160869">
    <property type="protein sequence ID" value="FBpp0159361"/>
    <property type="gene ID" value="FBgn0132910"/>
</dbReference>
<dbReference type="EnsemblMetazoa" id="XM_002000248.4">
    <property type="protein sequence ID" value="XP_002000284.1"/>
    <property type="gene ID" value="LOC6574226"/>
</dbReference>
<dbReference type="GeneID" id="6574226"/>
<dbReference type="KEGG" id="dmo:Dmoj_GI10144"/>
<dbReference type="CTD" id="41177"/>
<dbReference type="eggNOG" id="KOG1690">
    <property type="taxonomic scope" value="Eukaryota"/>
</dbReference>
<dbReference type="HOGENOM" id="CLU_066963_2_2_1"/>
<dbReference type="InParanoid" id="B4KB41"/>
<dbReference type="OMA" id="GATCAWQ"/>
<dbReference type="OrthoDB" id="3427at2759"/>
<dbReference type="PhylomeDB" id="B4KB41"/>
<dbReference type="Proteomes" id="UP000009192">
    <property type="component" value="Unassembled WGS sequence"/>
</dbReference>
<dbReference type="GO" id="GO:0005789">
    <property type="term" value="C:endoplasmic reticulum membrane"/>
    <property type="evidence" value="ECO:0007669"/>
    <property type="project" value="UniProtKB-SubCell"/>
</dbReference>
<dbReference type="GO" id="GO:0009953">
    <property type="term" value="P:dorsal/ventral pattern formation"/>
    <property type="evidence" value="ECO:0000250"/>
    <property type="project" value="UniProtKB"/>
</dbReference>
<dbReference type="InterPro" id="IPR015720">
    <property type="entry name" value="Emp24-like"/>
</dbReference>
<dbReference type="InterPro" id="IPR009038">
    <property type="entry name" value="GOLD_dom"/>
</dbReference>
<dbReference type="PANTHER" id="PTHR22811">
    <property type="entry name" value="TRANSMEMBRANE EMP24 DOMAIN-CONTAINING PROTEIN"/>
    <property type="match status" value="1"/>
</dbReference>
<dbReference type="Pfam" id="PF01105">
    <property type="entry name" value="EMP24_GP25L"/>
    <property type="match status" value="1"/>
</dbReference>
<dbReference type="SMART" id="SM01190">
    <property type="entry name" value="EMP24_GP25L"/>
    <property type="match status" value="1"/>
</dbReference>
<dbReference type="PROSITE" id="PS50866">
    <property type="entry name" value="GOLD"/>
    <property type="match status" value="1"/>
</dbReference>
<comment type="function">
    <text evidence="1">Eca and bai are essential, though not redundant, for dorsoventral patterning of the embryo. Specifically required during early embryogenesis for the activity of maternal tkv, while the zygotic tkv is not affected (By similarity).</text>
</comment>
<comment type="subcellular location">
    <subcellularLocation>
        <location evidence="2">Endoplasmic reticulum membrane</location>
        <topology evidence="2">Single-pass type I membrane protein</topology>
    </subcellularLocation>
</comment>
<comment type="similarity">
    <text evidence="2">Belongs to the EMP24/GP25L family.</text>
</comment>
<evidence type="ECO:0000250" key="1">
    <source>
        <dbReference type="UniProtKB" id="Q8SXY6"/>
    </source>
</evidence>
<evidence type="ECO:0000255" key="2"/>
<evidence type="ECO:0000255" key="3">
    <source>
        <dbReference type="PROSITE-ProRule" id="PRU00096"/>
    </source>
</evidence>
<evidence type="ECO:0000312" key="4">
    <source>
        <dbReference type="EMBL" id="EDW15745.1"/>
    </source>
</evidence>